<dbReference type="EMBL" id="AE016879">
    <property type="protein sequence ID" value="AAP24173.1"/>
    <property type="molecule type" value="Genomic_DNA"/>
</dbReference>
<dbReference type="EMBL" id="AE017334">
    <property type="protein sequence ID" value="AAT29199.1"/>
    <property type="molecule type" value="Genomic_DNA"/>
</dbReference>
<dbReference type="EMBL" id="AE017225">
    <property type="protein sequence ID" value="AAT52456.1"/>
    <property type="molecule type" value="Genomic_DNA"/>
</dbReference>
<dbReference type="RefSeq" id="NP_842687.1">
    <property type="nucleotide sequence ID" value="NC_003997.3"/>
</dbReference>
<dbReference type="RefSeq" id="WP_000004106.1">
    <property type="nucleotide sequence ID" value="NZ_WXXJ01000051.1"/>
</dbReference>
<dbReference type="RefSeq" id="YP_026405.1">
    <property type="nucleotide sequence ID" value="NC_005945.1"/>
</dbReference>
<dbReference type="SMR" id="Q81VS1"/>
<dbReference type="STRING" id="261594.GBAA_0119"/>
<dbReference type="DNASU" id="1084742"/>
<dbReference type="GeneID" id="93010934"/>
<dbReference type="KEGG" id="ban:BA_0119"/>
<dbReference type="KEGG" id="bar:GBAA_0119"/>
<dbReference type="KEGG" id="bat:BAS0119"/>
<dbReference type="PATRIC" id="fig|198094.11.peg.116"/>
<dbReference type="eggNOG" id="COG0186">
    <property type="taxonomic scope" value="Bacteria"/>
</dbReference>
<dbReference type="HOGENOM" id="CLU_073626_1_0_9"/>
<dbReference type="OMA" id="HPMYGKF"/>
<dbReference type="OrthoDB" id="9811714at2"/>
<dbReference type="Proteomes" id="UP000000427">
    <property type="component" value="Chromosome"/>
</dbReference>
<dbReference type="Proteomes" id="UP000000594">
    <property type="component" value="Chromosome"/>
</dbReference>
<dbReference type="GO" id="GO:0022627">
    <property type="term" value="C:cytosolic small ribosomal subunit"/>
    <property type="evidence" value="ECO:0007669"/>
    <property type="project" value="TreeGrafter"/>
</dbReference>
<dbReference type="GO" id="GO:0019843">
    <property type="term" value="F:rRNA binding"/>
    <property type="evidence" value="ECO:0007669"/>
    <property type="project" value="UniProtKB-UniRule"/>
</dbReference>
<dbReference type="GO" id="GO:0003735">
    <property type="term" value="F:structural constituent of ribosome"/>
    <property type="evidence" value="ECO:0007669"/>
    <property type="project" value="InterPro"/>
</dbReference>
<dbReference type="GO" id="GO:0006412">
    <property type="term" value="P:translation"/>
    <property type="evidence" value="ECO:0007669"/>
    <property type="project" value="UniProtKB-UniRule"/>
</dbReference>
<dbReference type="CDD" id="cd00364">
    <property type="entry name" value="Ribosomal_uS17"/>
    <property type="match status" value="1"/>
</dbReference>
<dbReference type="FunFam" id="2.40.50.140:FF:000026">
    <property type="entry name" value="30S ribosomal protein S17"/>
    <property type="match status" value="1"/>
</dbReference>
<dbReference type="Gene3D" id="2.40.50.140">
    <property type="entry name" value="Nucleic acid-binding proteins"/>
    <property type="match status" value="1"/>
</dbReference>
<dbReference type="HAMAP" id="MF_01345_B">
    <property type="entry name" value="Ribosomal_uS17_B"/>
    <property type="match status" value="1"/>
</dbReference>
<dbReference type="InterPro" id="IPR012340">
    <property type="entry name" value="NA-bd_OB-fold"/>
</dbReference>
<dbReference type="InterPro" id="IPR000266">
    <property type="entry name" value="Ribosomal_uS17"/>
</dbReference>
<dbReference type="InterPro" id="IPR019984">
    <property type="entry name" value="Ribosomal_uS17_bact/chlr"/>
</dbReference>
<dbReference type="InterPro" id="IPR019979">
    <property type="entry name" value="Ribosomal_uS17_CS"/>
</dbReference>
<dbReference type="NCBIfam" id="NF004123">
    <property type="entry name" value="PRK05610.1"/>
    <property type="match status" value="1"/>
</dbReference>
<dbReference type="NCBIfam" id="TIGR03635">
    <property type="entry name" value="uS17_bact"/>
    <property type="match status" value="1"/>
</dbReference>
<dbReference type="PANTHER" id="PTHR10744">
    <property type="entry name" value="40S RIBOSOMAL PROTEIN S11 FAMILY MEMBER"/>
    <property type="match status" value="1"/>
</dbReference>
<dbReference type="PANTHER" id="PTHR10744:SF1">
    <property type="entry name" value="SMALL RIBOSOMAL SUBUNIT PROTEIN US17M"/>
    <property type="match status" value="1"/>
</dbReference>
<dbReference type="Pfam" id="PF00366">
    <property type="entry name" value="Ribosomal_S17"/>
    <property type="match status" value="1"/>
</dbReference>
<dbReference type="PRINTS" id="PR00973">
    <property type="entry name" value="RIBOSOMALS17"/>
</dbReference>
<dbReference type="SUPFAM" id="SSF50249">
    <property type="entry name" value="Nucleic acid-binding proteins"/>
    <property type="match status" value="1"/>
</dbReference>
<dbReference type="PROSITE" id="PS00056">
    <property type="entry name" value="RIBOSOMAL_S17"/>
    <property type="match status" value="1"/>
</dbReference>
<organism>
    <name type="scientific">Bacillus anthracis</name>
    <dbReference type="NCBI Taxonomy" id="1392"/>
    <lineage>
        <taxon>Bacteria</taxon>
        <taxon>Bacillati</taxon>
        <taxon>Bacillota</taxon>
        <taxon>Bacilli</taxon>
        <taxon>Bacillales</taxon>
        <taxon>Bacillaceae</taxon>
        <taxon>Bacillus</taxon>
        <taxon>Bacillus cereus group</taxon>
    </lineage>
</organism>
<accession>Q81VS1</accession>
<accession>Q6I4S5</accession>
<accession>Q6KYH1</accession>
<reference key="1">
    <citation type="journal article" date="2003" name="Nature">
        <title>The genome sequence of Bacillus anthracis Ames and comparison to closely related bacteria.</title>
        <authorList>
            <person name="Read T.D."/>
            <person name="Peterson S.N."/>
            <person name="Tourasse N.J."/>
            <person name="Baillie L.W."/>
            <person name="Paulsen I.T."/>
            <person name="Nelson K.E."/>
            <person name="Tettelin H."/>
            <person name="Fouts D.E."/>
            <person name="Eisen J.A."/>
            <person name="Gill S.R."/>
            <person name="Holtzapple E.K."/>
            <person name="Okstad O.A."/>
            <person name="Helgason E."/>
            <person name="Rilstone J."/>
            <person name="Wu M."/>
            <person name="Kolonay J.F."/>
            <person name="Beanan M.J."/>
            <person name="Dodson R.J."/>
            <person name="Brinkac L.M."/>
            <person name="Gwinn M.L."/>
            <person name="DeBoy R.T."/>
            <person name="Madpu R."/>
            <person name="Daugherty S.C."/>
            <person name="Durkin A.S."/>
            <person name="Haft D.H."/>
            <person name="Nelson W.C."/>
            <person name="Peterson J.D."/>
            <person name="Pop M."/>
            <person name="Khouri H.M."/>
            <person name="Radune D."/>
            <person name="Benton J.L."/>
            <person name="Mahamoud Y."/>
            <person name="Jiang L."/>
            <person name="Hance I.R."/>
            <person name="Weidman J.F."/>
            <person name="Berry K.J."/>
            <person name="Plaut R.D."/>
            <person name="Wolf A.M."/>
            <person name="Watkins K.L."/>
            <person name="Nierman W.C."/>
            <person name="Hazen A."/>
            <person name="Cline R.T."/>
            <person name="Redmond C."/>
            <person name="Thwaite J.E."/>
            <person name="White O."/>
            <person name="Salzberg S.L."/>
            <person name="Thomason B."/>
            <person name="Friedlander A.M."/>
            <person name="Koehler T.M."/>
            <person name="Hanna P.C."/>
            <person name="Kolstoe A.-B."/>
            <person name="Fraser C.M."/>
        </authorList>
    </citation>
    <scope>NUCLEOTIDE SEQUENCE [LARGE SCALE GENOMIC DNA]</scope>
    <source>
        <strain>Ames / isolate Porton</strain>
    </source>
</reference>
<reference key="2">
    <citation type="journal article" date="2009" name="J. Bacteriol.">
        <title>The complete genome sequence of Bacillus anthracis Ames 'Ancestor'.</title>
        <authorList>
            <person name="Ravel J."/>
            <person name="Jiang L."/>
            <person name="Stanley S.T."/>
            <person name="Wilson M.R."/>
            <person name="Decker R.S."/>
            <person name="Read T.D."/>
            <person name="Worsham P."/>
            <person name="Keim P.S."/>
            <person name="Salzberg S.L."/>
            <person name="Fraser-Liggett C.M."/>
            <person name="Rasko D.A."/>
        </authorList>
    </citation>
    <scope>NUCLEOTIDE SEQUENCE [LARGE SCALE GENOMIC DNA]</scope>
    <source>
        <strain>Ames ancestor</strain>
    </source>
</reference>
<reference key="3">
    <citation type="submission" date="2004-01" db="EMBL/GenBank/DDBJ databases">
        <title>Complete genome sequence of Bacillus anthracis Sterne.</title>
        <authorList>
            <person name="Brettin T.S."/>
            <person name="Bruce D."/>
            <person name="Challacombe J.F."/>
            <person name="Gilna P."/>
            <person name="Han C."/>
            <person name="Hill K."/>
            <person name="Hitchcock P."/>
            <person name="Jackson P."/>
            <person name="Keim P."/>
            <person name="Longmire J."/>
            <person name="Lucas S."/>
            <person name="Okinaka R."/>
            <person name="Richardson P."/>
            <person name="Rubin E."/>
            <person name="Tice H."/>
        </authorList>
    </citation>
    <scope>NUCLEOTIDE SEQUENCE [LARGE SCALE GENOMIC DNA]</scope>
    <source>
        <strain>Sterne</strain>
    </source>
</reference>
<proteinExistence type="inferred from homology"/>
<keyword id="KW-1185">Reference proteome</keyword>
<keyword id="KW-0687">Ribonucleoprotein</keyword>
<keyword id="KW-0689">Ribosomal protein</keyword>
<keyword id="KW-0694">RNA-binding</keyword>
<keyword id="KW-0699">rRNA-binding</keyword>
<sequence>MSERNQRKVYTGRVVSDKMDKTITVLVETYKTHSLYGKRVKYSKKYKAHDEQNQAKLGDIVKIMETRPLSATKRFRLVEIVEEAVII</sequence>
<name>RS17_BACAN</name>
<evidence type="ECO:0000255" key="1">
    <source>
        <dbReference type="HAMAP-Rule" id="MF_01345"/>
    </source>
</evidence>
<evidence type="ECO:0000305" key="2"/>
<protein>
    <recommendedName>
        <fullName evidence="1">Small ribosomal subunit protein uS17</fullName>
    </recommendedName>
    <alternativeName>
        <fullName evidence="2">30S ribosomal protein S17</fullName>
    </alternativeName>
</protein>
<comment type="function">
    <text evidence="1">One of the primary rRNA binding proteins, it binds specifically to the 5'-end of 16S ribosomal RNA.</text>
</comment>
<comment type="subunit">
    <text evidence="1">Part of the 30S ribosomal subunit.</text>
</comment>
<comment type="similarity">
    <text evidence="1">Belongs to the universal ribosomal protein uS17 family.</text>
</comment>
<feature type="chain" id="PRO_0000233418" description="Small ribosomal subunit protein uS17">
    <location>
        <begin position="1"/>
        <end position="87"/>
    </location>
</feature>
<gene>
    <name evidence="1" type="primary">rpsQ</name>
    <name type="ordered locus">BA_0119</name>
    <name type="ordered locus">GBAA_0119</name>
    <name type="ordered locus">BAS0119</name>
</gene>